<sequence>MAKESMKNREAKRTKLVQRFAAKRSALKAIIQDPNAEPEAKWDAQLQLQKLPRDSSPVRQRNRCRLTGRPHGYYRKFGLSRIKLREAAMRGDVPGLVKASW</sequence>
<reference key="1">
    <citation type="journal article" date="2006" name="Nat. Biotechnol.">
        <title>Genome sequence of the ubiquitous hydrocarbon-degrading marine bacterium Alcanivorax borkumensis.</title>
        <authorList>
            <person name="Schneiker S."/>
            <person name="Martins dos Santos V.A.P."/>
            <person name="Bartels D."/>
            <person name="Bekel T."/>
            <person name="Brecht M."/>
            <person name="Buhrmester J."/>
            <person name="Chernikova T.N."/>
            <person name="Denaro R."/>
            <person name="Ferrer M."/>
            <person name="Gertler C."/>
            <person name="Goesmann A."/>
            <person name="Golyshina O.V."/>
            <person name="Kaminski F."/>
            <person name="Khachane A.N."/>
            <person name="Lang S."/>
            <person name="Linke B."/>
            <person name="McHardy A.C."/>
            <person name="Meyer F."/>
            <person name="Nechitaylo T."/>
            <person name="Puehler A."/>
            <person name="Regenhardt D."/>
            <person name="Rupp O."/>
            <person name="Sabirova J.S."/>
            <person name="Selbitschka W."/>
            <person name="Yakimov M.M."/>
            <person name="Timmis K.N."/>
            <person name="Vorhoelter F.-J."/>
            <person name="Weidner S."/>
            <person name="Kaiser O."/>
            <person name="Golyshin P.N."/>
        </authorList>
    </citation>
    <scope>NUCLEOTIDE SEQUENCE [LARGE SCALE GENOMIC DNA]</scope>
    <source>
        <strain>ATCC 700651 / DSM 11573 / NCIMB 13689 / SK2</strain>
    </source>
</reference>
<gene>
    <name evidence="1" type="primary">rpsN</name>
    <name type="ordered locus">ABO_0410</name>
</gene>
<dbReference type="EMBL" id="AM286690">
    <property type="protein sequence ID" value="CAL15858.1"/>
    <property type="molecule type" value="Genomic_DNA"/>
</dbReference>
<dbReference type="RefSeq" id="WP_011587698.1">
    <property type="nucleotide sequence ID" value="NC_008260.1"/>
</dbReference>
<dbReference type="SMR" id="Q0VSJ0"/>
<dbReference type="STRING" id="393595.ABO_0410"/>
<dbReference type="KEGG" id="abo:ABO_0410"/>
<dbReference type="eggNOG" id="COG0199">
    <property type="taxonomic scope" value="Bacteria"/>
</dbReference>
<dbReference type="HOGENOM" id="CLU_139869_0_1_6"/>
<dbReference type="OrthoDB" id="9810484at2"/>
<dbReference type="Proteomes" id="UP000008871">
    <property type="component" value="Chromosome"/>
</dbReference>
<dbReference type="GO" id="GO:0005737">
    <property type="term" value="C:cytoplasm"/>
    <property type="evidence" value="ECO:0007669"/>
    <property type="project" value="UniProtKB-ARBA"/>
</dbReference>
<dbReference type="GO" id="GO:0015935">
    <property type="term" value="C:small ribosomal subunit"/>
    <property type="evidence" value="ECO:0007669"/>
    <property type="project" value="TreeGrafter"/>
</dbReference>
<dbReference type="GO" id="GO:0019843">
    <property type="term" value="F:rRNA binding"/>
    <property type="evidence" value="ECO:0007669"/>
    <property type="project" value="UniProtKB-UniRule"/>
</dbReference>
<dbReference type="GO" id="GO:0003735">
    <property type="term" value="F:structural constituent of ribosome"/>
    <property type="evidence" value="ECO:0007669"/>
    <property type="project" value="InterPro"/>
</dbReference>
<dbReference type="GO" id="GO:0006412">
    <property type="term" value="P:translation"/>
    <property type="evidence" value="ECO:0007669"/>
    <property type="project" value="UniProtKB-UniRule"/>
</dbReference>
<dbReference type="FunFam" id="1.10.287.1480:FF:000001">
    <property type="entry name" value="30S ribosomal protein S14"/>
    <property type="match status" value="1"/>
</dbReference>
<dbReference type="Gene3D" id="1.10.287.1480">
    <property type="match status" value="1"/>
</dbReference>
<dbReference type="HAMAP" id="MF_00537">
    <property type="entry name" value="Ribosomal_uS14_1"/>
    <property type="match status" value="1"/>
</dbReference>
<dbReference type="InterPro" id="IPR001209">
    <property type="entry name" value="Ribosomal_uS14"/>
</dbReference>
<dbReference type="InterPro" id="IPR023036">
    <property type="entry name" value="Ribosomal_uS14_bac/plastid"/>
</dbReference>
<dbReference type="InterPro" id="IPR018271">
    <property type="entry name" value="Ribosomal_uS14_CS"/>
</dbReference>
<dbReference type="NCBIfam" id="NF006477">
    <property type="entry name" value="PRK08881.1"/>
    <property type="match status" value="1"/>
</dbReference>
<dbReference type="PANTHER" id="PTHR19836">
    <property type="entry name" value="30S RIBOSOMAL PROTEIN S14"/>
    <property type="match status" value="1"/>
</dbReference>
<dbReference type="PANTHER" id="PTHR19836:SF19">
    <property type="entry name" value="SMALL RIBOSOMAL SUBUNIT PROTEIN US14M"/>
    <property type="match status" value="1"/>
</dbReference>
<dbReference type="Pfam" id="PF00253">
    <property type="entry name" value="Ribosomal_S14"/>
    <property type="match status" value="1"/>
</dbReference>
<dbReference type="SUPFAM" id="SSF57716">
    <property type="entry name" value="Glucocorticoid receptor-like (DNA-binding domain)"/>
    <property type="match status" value="1"/>
</dbReference>
<dbReference type="PROSITE" id="PS00527">
    <property type="entry name" value="RIBOSOMAL_S14"/>
    <property type="match status" value="1"/>
</dbReference>
<protein>
    <recommendedName>
        <fullName evidence="1">Small ribosomal subunit protein uS14</fullName>
    </recommendedName>
    <alternativeName>
        <fullName evidence="2">30S ribosomal protein S14</fullName>
    </alternativeName>
</protein>
<organism>
    <name type="scientific">Alcanivorax borkumensis (strain ATCC 700651 / DSM 11573 / NCIMB 13689 / SK2)</name>
    <dbReference type="NCBI Taxonomy" id="393595"/>
    <lineage>
        <taxon>Bacteria</taxon>
        <taxon>Pseudomonadati</taxon>
        <taxon>Pseudomonadota</taxon>
        <taxon>Gammaproteobacteria</taxon>
        <taxon>Oceanospirillales</taxon>
        <taxon>Alcanivoracaceae</taxon>
        <taxon>Alcanivorax</taxon>
    </lineage>
</organism>
<accession>Q0VSJ0</accession>
<comment type="function">
    <text evidence="1">Binds 16S rRNA, required for the assembly of 30S particles and may also be responsible for determining the conformation of the 16S rRNA at the A site.</text>
</comment>
<comment type="subunit">
    <text evidence="1">Part of the 30S ribosomal subunit. Contacts proteins S3 and S10.</text>
</comment>
<comment type="similarity">
    <text evidence="1">Belongs to the universal ribosomal protein uS14 family.</text>
</comment>
<feature type="chain" id="PRO_1000128289" description="Small ribosomal subunit protein uS14">
    <location>
        <begin position="1"/>
        <end position="101"/>
    </location>
</feature>
<keyword id="KW-1185">Reference proteome</keyword>
<keyword id="KW-0687">Ribonucleoprotein</keyword>
<keyword id="KW-0689">Ribosomal protein</keyword>
<keyword id="KW-0694">RNA-binding</keyword>
<keyword id="KW-0699">rRNA-binding</keyword>
<name>RS14_ALCBS</name>
<evidence type="ECO:0000255" key="1">
    <source>
        <dbReference type="HAMAP-Rule" id="MF_00537"/>
    </source>
</evidence>
<evidence type="ECO:0000305" key="2"/>
<proteinExistence type="inferred from homology"/>